<comment type="function">
    <text evidence="1">Has both folate hydrolase and N-acetylated-alpha-linked-acidic dipeptidase (NAALADase) activity (By similarity). Also exhibits a dipeptidyl-peptidase IV type activity (By similarity).</text>
</comment>
<comment type="catalytic activity">
    <reaction evidence="1">
        <text>Release of an unsubstituted, C-terminal glutamyl residue, typically from Ac-Asp-Glu or folylpoly-gamma-glutamates.</text>
        <dbReference type="EC" id="3.4.17.21"/>
    </reaction>
</comment>
<comment type="cofactor">
    <cofactor evidence="1">
        <name>Zn(2+)</name>
        <dbReference type="ChEBI" id="CHEBI:29105"/>
    </cofactor>
    <text evidence="1">Binds 2 Zn(2+) ions per subunit. Required for NAALADase activity.</text>
</comment>
<comment type="subcellular location">
    <subcellularLocation>
        <location evidence="5 6">Secreted</location>
    </subcellularLocation>
</comment>
<comment type="similarity">
    <text evidence="7">Belongs to the peptidase M28 family. M28B subfamily.</text>
</comment>
<reference key="1">
    <citation type="journal article" date="2011" name="Genome Biol.">
        <title>Comparative and functional genomics provide insights into the pathogenicity of dermatophytic fungi.</title>
        <authorList>
            <person name="Burmester A."/>
            <person name="Shelest E."/>
            <person name="Gloeckner G."/>
            <person name="Heddergott C."/>
            <person name="Schindler S."/>
            <person name="Staib P."/>
            <person name="Heidel A."/>
            <person name="Felder M."/>
            <person name="Petzold A."/>
            <person name="Szafranski K."/>
            <person name="Feuermann M."/>
            <person name="Pedruzzi I."/>
            <person name="Priebe S."/>
            <person name="Groth M."/>
            <person name="Winkler R."/>
            <person name="Li W."/>
            <person name="Kniemeyer O."/>
            <person name="Schroeckh V."/>
            <person name="Hertweck C."/>
            <person name="Hube B."/>
            <person name="White T.C."/>
            <person name="Platzer M."/>
            <person name="Guthke R."/>
            <person name="Heitman J."/>
            <person name="Woestemeyer J."/>
            <person name="Zipfel P.F."/>
            <person name="Monod M."/>
            <person name="Brakhage A.A."/>
        </authorList>
    </citation>
    <scope>NUCLEOTIDE SEQUENCE [LARGE SCALE GENOMIC DNA]</scope>
    <scope>IDENTIFICATION BY MASS SPECTROMETRY</scope>
    <scope>SUBCELLULAR LOCATION</scope>
    <source>
        <strain>ATCC MYA-4681 / CBS 112371</strain>
    </source>
</reference>
<reference key="2">
    <citation type="journal article" date="2011" name="Proteomics">
        <title>Identification of novel secreted proteases during extracellular proteolysis by dermatophytes at acidic pH.</title>
        <authorList>
            <person name="Sriranganadane D."/>
            <person name="Waridel P."/>
            <person name="Salamin K."/>
            <person name="Feuermann M."/>
            <person name="Mignon B."/>
            <person name="Staib P."/>
            <person name="Neuhaus J.M."/>
            <person name="Quadroni M."/>
            <person name="Monod M."/>
        </authorList>
    </citation>
    <scope>IDENTIFICATION BY MASS SPECTROMETRY</scope>
    <scope>SUBCELLULAR LOCATION</scope>
</reference>
<keyword id="KW-0121">Carboxypeptidase</keyword>
<keyword id="KW-0325">Glycoprotein</keyword>
<keyword id="KW-0378">Hydrolase</keyword>
<keyword id="KW-0479">Metal-binding</keyword>
<keyword id="KW-0482">Metalloprotease</keyword>
<keyword id="KW-0645">Protease</keyword>
<keyword id="KW-1185">Reference proteome</keyword>
<keyword id="KW-0964">Secreted</keyword>
<keyword id="KW-0732">Signal</keyword>
<keyword id="KW-0862">Zinc</keyword>
<feature type="signal peptide" evidence="2">
    <location>
        <begin position="1"/>
        <end position="18"/>
    </location>
</feature>
<feature type="chain" id="PRO_5003054615" description="Probable glutamate carboxypeptidase ARB_02390">
    <location>
        <begin position="19"/>
        <end position="727"/>
    </location>
</feature>
<feature type="domain" description="PA" evidence="2">
    <location>
        <begin position="158"/>
        <end position="296"/>
    </location>
</feature>
<feature type="region of interest" description="Disordered" evidence="4">
    <location>
        <begin position="255"/>
        <end position="279"/>
    </location>
</feature>
<feature type="region of interest" description="NAALADase" evidence="1">
    <location>
        <begin position="266"/>
        <end position="565"/>
    </location>
</feature>
<feature type="active site" description="For NAALADase activity" evidence="1">
    <location>
        <position position="414"/>
    </location>
</feature>
<feature type="active site" description="Charge relay system" evidence="2">
    <location>
        <position position="604"/>
    </location>
</feature>
<feature type="active site" description="Charge relay system" evidence="2">
    <location>
        <position position="665"/>
    </location>
</feature>
<feature type="binding site" evidence="1">
    <location>
        <position position="197"/>
    </location>
    <ligand>
        <name>substrate</name>
    </ligand>
</feature>
<feature type="binding site" evidence="1">
    <location>
        <position position="261"/>
    </location>
    <ligand>
        <name>Ca(2+)</name>
        <dbReference type="ChEBI" id="CHEBI:29108"/>
    </ligand>
</feature>
<feature type="binding site" evidence="1">
    <location>
        <position position="264"/>
    </location>
    <ligand>
        <name>Ca(2+)</name>
        <dbReference type="ChEBI" id="CHEBI:29108"/>
    </ligand>
</feature>
<feature type="binding site" evidence="1">
    <location>
        <position position="366"/>
    </location>
    <ligand>
        <name>Zn(2+)</name>
        <dbReference type="ChEBI" id="CHEBI:29105"/>
        <label>1</label>
    </ligand>
</feature>
<feature type="binding site" evidence="1">
    <location>
        <position position="415"/>
    </location>
    <ligand>
        <name>Zn(2+)</name>
        <dbReference type="ChEBI" id="CHEBI:29105"/>
        <label>2</label>
    </ligand>
</feature>
<feature type="binding site" evidence="1">
    <location>
        <position position="423"/>
    </location>
    <ligand>
        <name>Ca(2+)</name>
        <dbReference type="ChEBI" id="CHEBI:29108"/>
    </ligand>
</feature>
<feature type="binding site" evidence="1">
    <location>
        <position position="426"/>
    </location>
    <ligand>
        <name>Ca(2+)</name>
        <dbReference type="ChEBI" id="CHEBI:29108"/>
    </ligand>
</feature>
<feature type="binding site" evidence="1">
    <location>
        <position position="443"/>
    </location>
    <ligand>
        <name>Zn(2+)</name>
        <dbReference type="ChEBI" id="CHEBI:29105"/>
        <label>1</label>
    </ligand>
</feature>
<feature type="binding site" evidence="1">
    <location>
        <begin position="516"/>
        <end position="518"/>
    </location>
    <ligand>
        <name>substrate</name>
    </ligand>
</feature>
<feature type="binding site" evidence="1">
    <location>
        <position position="530"/>
    </location>
    <ligand>
        <name>substrate</name>
    </ligand>
</feature>
<feature type="binding site" evidence="1">
    <location>
        <position position="531"/>
    </location>
    <ligand>
        <name>Zn(2+)</name>
        <dbReference type="ChEBI" id="CHEBI:29105"/>
        <label>2</label>
    </ligand>
</feature>
<feature type="binding site" evidence="1">
    <location>
        <begin position="675"/>
        <end position="676"/>
    </location>
    <ligand>
        <name>substrate</name>
    </ligand>
</feature>
<feature type="glycosylation site" description="N-linked (GlcNAc...) asparagine" evidence="3">
    <location>
        <position position="60"/>
    </location>
</feature>
<feature type="glycosylation site" description="N-linked (GlcNAc...) asparagine" evidence="3">
    <location>
        <position position="80"/>
    </location>
</feature>
<feature type="glycosylation site" description="N-linked (GlcNAc...) asparagine" evidence="3">
    <location>
        <position position="223"/>
    </location>
</feature>
<feature type="glycosylation site" description="N-linked (GlcNAc...) asparagine" evidence="3">
    <location>
        <position position="310"/>
    </location>
</feature>
<feature type="glycosylation site" description="N-linked (GlcNAc...) asparagine" evidence="3">
    <location>
        <position position="319"/>
    </location>
</feature>
<feature type="glycosylation site" description="N-linked (GlcNAc...) asparagine" evidence="3">
    <location>
        <position position="353"/>
    </location>
</feature>
<feature type="glycosylation site" description="N-linked (GlcNAc...) asparagine" evidence="3">
    <location>
        <position position="614"/>
    </location>
</feature>
<feature type="glycosylation site" description="N-linked (GlcNAc...) asparagine" evidence="3">
    <location>
        <position position="692"/>
    </location>
</feature>
<protein>
    <recommendedName>
        <fullName evidence="7">Probable glutamate carboxypeptidase ARB_02390</fullName>
        <ecNumber evidence="1">3.4.17.21</ecNumber>
    </recommendedName>
</protein>
<gene>
    <name type="ORF">ARB_02390</name>
</gene>
<organism>
    <name type="scientific">Arthroderma benhamiae (strain ATCC MYA-4681 / CBS 112371)</name>
    <name type="common">Trichophyton mentagrophytes</name>
    <dbReference type="NCBI Taxonomy" id="663331"/>
    <lineage>
        <taxon>Eukaryota</taxon>
        <taxon>Fungi</taxon>
        <taxon>Dikarya</taxon>
        <taxon>Ascomycota</taxon>
        <taxon>Pezizomycotina</taxon>
        <taxon>Eurotiomycetes</taxon>
        <taxon>Eurotiomycetidae</taxon>
        <taxon>Onygenales</taxon>
        <taxon>Arthrodermataceae</taxon>
        <taxon>Trichophyton</taxon>
    </lineage>
</organism>
<accession>D4B1R0</accession>
<name>GCP1_ARTBC</name>
<proteinExistence type="evidence at protein level"/>
<evidence type="ECO:0000250" key="1">
    <source>
        <dbReference type="UniProtKB" id="Q04609"/>
    </source>
</evidence>
<evidence type="ECO:0000255" key="2"/>
<evidence type="ECO:0000255" key="3">
    <source>
        <dbReference type="PROSITE-ProRule" id="PRU00498"/>
    </source>
</evidence>
<evidence type="ECO:0000256" key="4">
    <source>
        <dbReference type="SAM" id="MobiDB-lite"/>
    </source>
</evidence>
<evidence type="ECO:0000269" key="5">
    <source>
    </source>
</evidence>
<evidence type="ECO:0000269" key="6">
    <source>
    </source>
</evidence>
<evidence type="ECO:0000305" key="7"/>
<dbReference type="EC" id="3.4.17.21" evidence="1"/>
<dbReference type="EMBL" id="ABSU01000027">
    <property type="protein sequence ID" value="EFE30692.1"/>
    <property type="molecule type" value="Genomic_DNA"/>
</dbReference>
<dbReference type="RefSeq" id="XP_003011332.1">
    <property type="nucleotide sequence ID" value="XM_003011286.1"/>
</dbReference>
<dbReference type="SMR" id="D4B1R0"/>
<dbReference type="GeneID" id="9524233"/>
<dbReference type="KEGG" id="abe:ARB_02390"/>
<dbReference type="eggNOG" id="KOG2195">
    <property type="taxonomic scope" value="Eukaryota"/>
</dbReference>
<dbReference type="HOGENOM" id="CLU_005688_2_0_1"/>
<dbReference type="OMA" id="TEWMEEY"/>
<dbReference type="OrthoDB" id="5841748at2759"/>
<dbReference type="Proteomes" id="UP000008866">
    <property type="component" value="Unassembled WGS sequence"/>
</dbReference>
<dbReference type="GO" id="GO:0005576">
    <property type="term" value="C:extracellular region"/>
    <property type="evidence" value="ECO:0007669"/>
    <property type="project" value="UniProtKB-SubCell"/>
</dbReference>
<dbReference type="GO" id="GO:0046872">
    <property type="term" value="F:metal ion binding"/>
    <property type="evidence" value="ECO:0007669"/>
    <property type="project" value="UniProtKB-KW"/>
</dbReference>
<dbReference type="GO" id="GO:0004181">
    <property type="term" value="F:metallocarboxypeptidase activity"/>
    <property type="evidence" value="ECO:0007669"/>
    <property type="project" value="UniProtKB-EC"/>
</dbReference>
<dbReference type="GO" id="GO:0006508">
    <property type="term" value="P:proteolysis"/>
    <property type="evidence" value="ECO:0007669"/>
    <property type="project" value="UniProtKB-KW"/>
</dbReference>
<dbReference type="CDD" id="cd08022">
    <property type="entry name" value="M28_PSMA_like"/>
    <property type="match status" value="1"/>
</dbReference>
<dbReference type="CDD" id="cd02121">
    <property type="entry name" value="PA_GCPII_like"/>
    <property type="match status" value="1"/>
</dbReference>
<dbReference type="FunFam" id="3.50.30.30:FF:000008">
    <property type="entry name" value="Glutamate carboxypeptidase 2"/>
    <property type="match status" value="1"/>
</dbReference>
<dbReference type="FunFam" id="3.40.630.10:FF:000101">
    <property type="entry name" value="N-acetylated alpha-linked acidic dipeptidase like 1"/>
    <property type="match status" value="1"/>
</dbReference>
<dbReference type="Gene3D" id="3.50.30.30">
    <property type="match status" value="1"/>
</dbReference>
<dbReference type="Gene3D" id="1.20.930.40">
    <property type="entry name" value="Transferrin receptor-like, dimerisation domain"/>
    <property type="match status" value="1"/>
</dbReference>
<dbReference type="Gene3D" id="3.40.630.10">
    <property type="entry name" value="Zn peptidases"/>
    <property type="match status" value="1"/>
</dbReference>
<dbReference type="InterPro" id="IPR046450">
    <property type="entry name" value="PA_dom_sf"/>
</dbReference>
<dbReference type="InterPro" id="IPR003137">
    <property type="entry name" value="PA_domain"/>
</dbReference>
<dbReference type="InterPro" id="IPR007484">
    <property type="entry name" value="Peptidase_M28"/>
</dbReference>
<dbReference type="InterPro" id="IPR039373">
    <property type="entry name" value="Peptidase_M28B"/>
</dbReference>
<dbReference type="InterPro" id="IPR007365">
    <property type="entry name" value="TFR-like_dimer_dom"/>
</dbReference>
<dbReference type="InterPro" id="IPR036757">
    <property type="entry name" value="TFR-like_dimer_dom_sf"/>
</dbReference>
<dbReference type="PANTHER" id="PTHR10404">
    <property type="entry name" value="N-ACETYLATED-ALPHA-LINKED ACIDIC DIPEPTIDASE"/>
    <property type="match status" value="1"/>
</dbReference>
<dbReference type="PANTHER" id="PTHR10404:SF46">
    <property type="entry name" value="VACUOLAR PROTEIN SORTING-ASSOCIATED PROTEIN 70"/>
    <property type="match status" value="1"/>
</dbReference>
<dbReference type="Pfam" id="PF02225">
    <property type="entry name" value="PA"/>
    <property type="match status" value="1"/>
</dbReference>
<dbReference type="Pfam" id="PF04389">
    <property type="entry name" value="Peptidase_M28"/>
    <property type="match status" value="1"/>
</dbReference>
<dbReference type="Pfam" id="PF04253">
    <property type="entry name" value="TFR_dimer"/>
    <property type="match status" value="1"/>
</dbReference>
<dbReference type="SUPFAM" id="SSF52025">
    <property type="entry name" value="PA domain"/>
    <property type="match status" value="1"/>
</dbReference>
<dbReference type="SUPFAM" id="SSF47672">
    <property type="entry name" value="Transferrin receptor-like dimerisation domain"/>
    <property type="match status" value="1"/>
</dbReference>
<dbReference type="SUPFAM" id="SSF53187">
    <property type="entry name" value="Zn-dependent exopeptidases"/>
    <property type="match status" value="1"/>
</dbReference>
<sequence>MIVKSLSLLALAAATVEGCVRERDVGSVDILSVLSKRGHGHPHLPHLSKYESMLINSFDNTTVDSWAYYYTHGIHIAGTNQSMAQWTADKWTEFGIPSSLVSYDVYLNYPVSHSLSLTHPDGTTWEASLVEDVLKEDDTTSYPDRIPTFHGYSASGEATAEYVYVGRGQKVDFERLIQLGVDLKGKIAIARYGGPFRGLKVKNAQDQGMIGCIIFTDPADDGNVTVANGLKAYPNGPARNPSAVQRGSVQFLSMFPGDPTTPGYPSRPDSPRKDKSPVVPKIPSIPISQLDAQPILAALDGHGTPGKEVNRTRWVGALNATYATGPAPGAKLSMSNVMRDTYTPIWNSIGIINGTEQDEVVIIGNHRDAWIIGGAGDPNSGSSIMVELAKAFGKLQKAGWKPKRTIVMCSWDAEEYGLVGSTEWVEEYLPWLKASAVAYLNIDVAVSGPVPDLSATPELHKLALESMKKVIWPYKGRQDTTMYDVWNTASGGEVGVLGSGSDYTAFVHNGIASLDTGAGGDGNTDPVYHYHSNYDSYHWMATYGDPGFHTHVAMGQFLGLLGYHLATDDIIPFDVTNYGVQMTKYLDVLKKYIAASKFPDLDVSKIESAICSFNVSANAVAKLQKKAEHNVHDQQLRKHLNTIYRDFGRGFVSQGGLPDREFYRHMLYAPGLDTGYAPTTFPGVTESLDAGNRTRAVEYIERASNAIYVAAGILSSCHDCNQFVAQE</sequence>